<sequence length="337" mass="35762">MKRIAVLTSGGDAPGMNAAIRAVVRKAISEGMEVYGINRGYAGMVDGDIFPLGSKEVGDKISRGGTFLYSARYPEFAQLEGQLAGIEQLKKHGIEGVVVIGGDGSYHGAMRLTEHGFPAVGIPGTIDNDIAGTDYTIGFDTAVNTAVEAIDKLRDTSSSHGRTFVVEVMGRNAGDIALWAGIASGADQIIVPEEEFDIEKVASTIQYDFEHKGKNHHIIVLAEGVMSGEAFAQKLKEAGDKSDLRVTNLGHILRGGSPTARDRVIASWMGSHAVELLKEGKGGLAVGIHNEELVESPILGTAEEGALFSLTEEGKIIVNNPHKARLDFAALNRSLSQ</sequence>
<dbReference type="EC" id="2.7.1.11" evidence="1"/>
<dbReference type="EMBL" id="CP000056">
    <property type="protein sequence ID" value="AAX72074.1"/>
    <property type="molecule type" value="Genomic_DNA"/>
</dbReference>
<dbReference type="RefSeq" id="WP_002984444.1">
    <property type="nucleotide sequence ID" value="NC_007296.2"/>
</dbReference>
<dbReference type="SMR" id="Q48T86"/>
<dbReference type="GeneID" id="69900759"/>
<dbReference type="KEGG" id="spb:M28_Spy0961"/>
<dbReference type="HOGENOM" id="CLU_020655_0_1_9"/>
<dbReference type="UniPathway" id="UPA00109">
    <property type="reaction ID" value="UER00182"/>
</dbReference>
<dbReference type="GO" id="GO:0005945">
    <property type="term" value="C:6-phosphofructokinase complex"/>
    <property type="evidence" value="ECO:0007669"/>
    <property type="project" value="TreeGrafter"/>
</dbReference>
<dbReference type="GO" id="GO:0003872">
    <property type="term" value="F:6-phosphofructokinase activity"/>
    <property type="evidence" value="ECO:0007669"/>
    <property type="project" value="UniProtKB-UniRule"/>
</dbReference>
<dbReference type="GO" id="GO:0016208">
    <property type="term" value="F:AMP binding"/>
    <property type="evidence" value="ECO:0007669"/>
    <property type="project" value="TreeGrafter"/>
</dbReference>
<dbReference type="GO" id="GO:0005524">
    <property type="term" value="F:ATP binding"/>
    <property type="evidence" value="ECO:0007669"/>
    <property type="project" value="UniProtKB-KW"/>
</dbReference>
<dbReference type="GO" id="GO:0070095">
    <property type="term" value="F:fructose-6-phosphate binding"/>
    <property type="evidence" value="ECO:0007669"/>
    <property type="project" value="TreeGrafter"/>
</dbReference>
<dbReference type="GO" id="GO:0042802">
    <property type="term" value="F:identical protein binding"/>
    <property type="evidence" value="ECO:0007669"/>
    <property type="project" value="TreeGrafter"/>
</dbReference>
<dbReference type="GO" id="GO:0046872">
    <property type="term" value="F:metal ion binding"/>
    <property type="evidence" value="ECO:0007669"/>
    <property type="project" value="UniProtKB-KW"/>
</dbReference>
<dbReference type="GO" id="GO:0048029">
    <property type="term" value="F:monosaccharide binding"/>
    <property type="evidence" value="ECO:0007669"/>
    <property type="project" value="TreeGrafter"/>
</dbReference>
<dbReference type="GO" id="GO:0061621">
    <property type="term" value="P:canonical glycolysis"/>
    <property type="evidence" value="ECO:0007669"/>
    <property type="project" value="TreeGrafter"/>
</dbReference>
<dbReference type="GO" id="GO:0030388">
    <property type="term" value="P:fructose 1,6-bisphosphate metabolic process"/>
    <property type="evidence" value="ECO:0007669"/>
    <property type="project" value="TreeGrafter"/>
</dbReference>
<dbReference type="GO" id="GO:0006002">
    <property type="term" value="P:fructose 6-phosphate metabolic process"/>
    <property type="evidence" value="ECO:0007669"/>
    <property type="project" value="InterPro"/>
</dbReference>
<dbReference type="FunFam" id="3.40.50.450:FF:000001">
    <property type="entry name" value="ATP-dependent 6-phosphofructokinase"/>
    <property type="match status" value="1"/>
</dbReference>
<dbReference type="FunFam" id="3.40.50.460:FF:000002">
    <property type="entry name" value="ATP-dependent 6-phosphofructokinase"/>
    <property type="match status" value="1"/>
</dbReference>
<dbReference type="Gene3D" id="3.40.50.450">
    <property type="match status" value="1"/>
</dbReference>
<dbReference type="Gene3D" id="3.40.50.460">
    <property type="entry name" value="Phosphofructokinase domain"/>
    <property type="match status" value="1"/>
</dbReference>
<dbReference type="HAMAP" id="MF_00339">
    <property type="entry name" value="Phosphofructokinase_I_B1"/>
    <property type="match status" value="1"/>
</dbReference>
<dbReference type="InterPro" id="IPR022953">
    <property type="entry name" value="ATP_PFK"/>
</dbReference>
<dbReference type="InterPro" id="IPR012003">
    <property type="entry name" value="ATP_PFK_prok-type"/>
</dbReference>
<dbReference type="InterPro" id="IPR012828">
    <property type="entry name" value="PFKA_ATP_prok"/>
</dbReference>
<dbReference type="InterPro" id="IPR015912">
    <property type="entry name" value="Phosphofructokinase_CS"/>
</dbReference>
<dbReference type="InterPro" id="IPR000023">
    <property type="entry name" value="Phosphofructokinase_dom"/>
</dbReference>
<dbReference type="InterPro" id="IPR035966">
    <property type="entry name" value="PKF_sf"/>
</dbReference>
<dbReference type="NCBIfam" id="TIGR02482">
    <property type="entry name" value="PFKA_ATP"/>
    <property type="match status" value="1"/>
</dbReference>
<dbReference type="NCBIfam" id="NF002872">
    <property type="entry name" value="PRK03202.1"/>
    <property type="match status" value="1"/>
</dbReference>
<dbReference type="PANTHER" id="PTHR13697:SF4">
    <property type="entry name" value="ATP-DEPENDENT 6-PHOSPHOFRUCTOKINASE"/>
    <property type="match status" value="1"/>
</dbReference>
<dbReference type="PANTHER" id="PTHR13697">
    <property type="entry name" value="PHOSPHOFRUCTOKINASE"/>
    <property type="match status" value="1"/>
</dbReference>
<dbReference type="Pfam" id="PF00365">
    <property type="entry name" value="PFK"/>
    <property type="match status" value="1"/>
</dbReference>
<dbReference type="PIRSF" id="PIRSF000532">
    <property type="entry name" value="ATP_PFK_prok"/>
    <property type="match status" value="1"/>
</dbReference>
<dbReference type="PRINTS" id="PR00476">
    <property type="entry name" value="PHFRCTKINASE"/>
</dbReference>
<dbReference type="SUPFAM" id="SSF53784">
    <property type="entry name" value="Phosphofructokinase"/>
    <property type="match status" value="1"/>
</dbReference>
<dbReference type="PROSITE" id="PS00433">
    <property type="entry name" value="PHOSPHOFRUCTOKINASE"/>
    <property type="match status" value="1"/>
</dbReference>
<gene>
    <name evidence="1" type="primary">pfkA</name>
    <name type="ordered locus">M28_Spy0961</name>
</gene>
<proteinExistence type="inferred from homology"/>
<protein>
    <recommendedName>
        <fullName evidence="1">ATP-dependent 6-phosphofructokinase</fullName>
        <shortName evidence="1">ATP-PFK</shortName>
        <shortName evidence="1">Phosphofructokinase</shortName>
        <ecNumber evidence="1">2.7.1.11</ecNumber>
    </recommendedName>
    <alternativeName>
        <fullName evidence="1">Phosphohexokinase</fullName>
    </alternativeName>
</protein>
<comment type="function">
    <text evidence="1">Catalyzes the phosphorylation of D-fructose 6-phosphate to fructose 1,6-bisphosphate by ATP, the first committing step of glycolysis.</text>
</comment>
<comment type="catalytic activity">
    <reaction evidence="1">
        <text>beta-D-fructose 6-phosphate + ATP = beta-D-fructose 1,6-bisphosphate + ADP + H(+)</text>
        <dbReference type="Rhea" id="RHEA:16109"/>
        <dbReference type="ChEBI" id="CHEBI:15378"/>
        <dbReference type="ChEBI" id="CHEBI:30616"/>
        <dbReference type="ChEBI" id="CHEBI:32966"/>
        <dbReference type="ChEBI" id="CHEBI:57634"/>
        <dbReference type="ChEBI" id="CHEBI:456216"/>
        <dbReference type="EC" id="2.7.1.11"/>
    </reaction>
</comment>
<comment type="cofactor">
    <cofactor evidence="1">
        <name>Mg(2+)</name>
        <dbReference type="ChEBI" id="CHEBI:18420"/>
    </cofactor>
</comment>
<comment type="activity regulation">
    <text evidence="1">Allosterically activated by ADP and other diphosphonucleosides, and allosterically inhibited by phosphoenolpyruvate.</text>
</comment>
<comment type="pathway">
    <text evidence="1">Carbohydrate degradation; glycolysis; D-glyceraldehyde 3-phosphate and glycerone phosphate from D-glucose: step 3/4.</text>
</comment>
<comment type="subunit">
    <text evidence="1">Homotetramer.</text>
</comment>
<comment type="subcellular location">
    <subcellularLocation>
        <location evidence="1">Cytoplasm</location>
    </subcellularLocation>
</comment>
<comment type="similarity">
    <text evidence="1">Belongs to the phosphofructokinase type A (PFKA) family. ATP-dependent PFK group I subfamily. Prokaryotic clade 'B1' sub-subfamily.</text>
</comment>
<accession>Q48T86</accession>
<name>PFKA_STRPM</name>
<reference key="1">
    <citation type="journal article" date="2005" name="J. Infect. Dis.">
        <title>Genome sequence of a serotype M28 strain of group A Streptococcus: potential new insights into puerperal sepsis and bacterial disease specificity.</title>
        <authorList>
            <person name="Green N.M."/>
            <person name="Zhang S."/>
            <person name="Porcella S.F."/>
            <person name="Nagiec M.J."/>
            <person name="Barbian K.D."/>
            <person name="Beres S.B."/>
            <person name="Lefebvre R.B."/>
            <person name="Musser J.M."/>
        </authorList>
    </citation>
    <scope>NUCLEOTIDE SEQUENCE [LARGE SCALE GENOMIC DNA]</scope>
    <source>
        <strain>MGAS6180</strain>
    </source>
</reference>
<organism>
    <name type="scientific">Streptococcus pyogenes serotype M28 (strain MGAS6180)</name>
    <dbReference type="NCBI Taxonomy" id="319701"/>
    <lineage>
        <taxon>Bacteria</taxon>
        <taxon>Bacillati</taxon>
        <taxon>Bacillota</taxon>
        <taxon>Bacilli</taxon>
        <taxon>Lactobacillales</taxon>
        <taxon>Streptococcaceae</taxon>
        <taxon>Streptococcus</taxon>
    </lineage>
</organism>
<keyword id="KW-0021">Allosteric enzyme</keyword>
<keyword id="KW-0067">ATP-binding</keyword>
<keyword id="KW-0963">Cytoplasm</keyword>
<keyword id="KW-0324">Glycolysis</keyword>
<keyword id="KW-0418">Kinase</keyword>
<keyword id="KW-0460">Magnesium</keyword>
<keyword id="KW-0479">Metal-binding</keyword>
<keyword id="KW-0547">Nucleotide-binding</keyword>
<keyword id="KW-0808">Transferase</keyword>
<evidence type="ECO:0000255" key="1">
    <source>
        <dbReference type="HAMAP-Rule" id="MF_00339"/>
    </source>
</evidence>
<feature type="chain" id="PRO_1000059800" description="ATP-dependent 6-phosphofructokinase">
    <location>
        <begin position="1"/>
        <end position="337"/>
    </location>
</feature>
<feature type="active site" description="Proton acceptor" evidence="1">
    <location>
        <position position="127"/>
    </location>
</feature>
<feature type="binding site" evidence="1">
    <location>
        <position position="11"/>
    </location>
    <ligand>
        <name>ATP</name>
        <dbReference type="ChEBI" id="CHEBI:30616"/>
    </ligand>
</feature>
<feature type="binding site" evidence="1">
    <location>
        <begin position="21"/>
        <end position="25"/>
    </location>
    <ligand>
        <name>ADP</name>
        <dbReference type="ChEBI" id="CHEBI:456216"/>
        <note>allosteric activator; ligand shared between dimeric partners</note>
    </ligand>
</feature>
<feature type="binding site" evidence="1">
    <location>
        <begin position="72"/>
        <end position="73"/>
    </location>
    <ligand>
        <name>ATP</name>
        <dbReference type="ChEBI" id="CHEBI:30616"/>
    </ligand>
</feature>
<feature type="binding site" evidence="1">
    <location>
        <begin position="102"/>
        <end position="105"/>
    </location>
    <ligand>
        <name>ATP</name>
        <dbReference type="ChEBI" id="CHEBI:30616"/>
    </ligand>
</feature>
<feature type="binding site" evidence="1">
    <location>
        <position position="103"/>
    </location>
    <ligand>
        <name>Mg(2+)</name>
        <dbReference type="ChEBI" id="CHEBI:18420"/>
        <note>catalytic</note>
    </ligand>
</feature>
<feature type="binding site" description="in other chain" evidence="1">
    <location>
        <begin position="125"/>
        <end position="127"/>
    </location>
    <ligand>
        <name>substrate</name>
        <note>ligand shared between dimeric partners</note>
    </ligand>
</feature>
<feature type="binding site" description="in other chain" evidence="1">
    <location>
        <position position="154"/>
    </location>
    <ligand>
        <name>ADP</name>
        <dbReference type="ChEBI" id="CHEBI:456216"/>
        <note>allosteric activator; ligand shared between dimeric partners</note>
    </ligand>
</feature>
<feature type="binding site" evidence="1">
    <location>
        <position position="162"/>
    </location>
    <ligand>
        <name>substrate</name>
        <note>ligand shared between dimeric partners</note>
    </ligand>
</feature>
<feature type="binding site" description="in other chain" evidence="1">
    <location>
        <begin position="169"/>
        <end position="171"/>
    </location>
    <ligand>
        <name>substrate</name>
        <note>ligand shared between dimeric partners</note>
    </ligand>
</feature>
<feature type="binding site" description="in other chain" evidence="1">
    <location>
        <begin position="185"/>
        <end position="187"/>
    </location>
    <ligand>
        <name>ADP</name>
        <dbReference type="ChEBI" id="CHEBI:456216"/>
        <note>allosteric activator; ligand shared between dimeric partners</note>
    </ligand>
</feature>
<feature type="binding site" description="in other chain" evidence="1">
    <location>
        <position position="212"/>
    </location>
    <ligand>
        <name>ADP</name>
        <dbReference type="ChEBI" id="CHEBI:456216"/>
        <note>allosteric activator; ligand shared between dimeric partners</note>
    </ligand>
</feature>
<feature type="binding site" description="in other chain" evidence="1">
    <location>
        <begin position="214"/>
        <end position="216"/>
    </location>
    <ligand>
        <name>ADP</name>
        <dbReference type="ChEBI" id="CHEBI:456216"/>
        <note>allosteric activator; ligand shared between dimeric partners</note>
    </ligand>
</feature>
<feature type="binding site" description="in other chain" evidence="1">
    <location>
        <position position="223"/>
    </location>
    <ligand>
        <name>substrate</name>
        <note>ligand shared between dimeric partners</note>
    </ligand>
</feature>
<feature type="binding site" evidence="1">
    <location>
        <position position="245"/>
    </location>
    <ligand>
        <name>substrate</name>
        <note>ligand shared between dimeric partners</note>
    </ligand>
</feature>
<feature type="binding site" description="in other chain" evidence="1">
    <location>
        <begin position="251"/>
        <end position="254"/>
    </location>
    <ligand>
        <name>substrate</name>
        <note>ligand shared between dimeric partners</note>
    </ligand>
</feature>